<reference key="1">
    <citation type="journal article" date="2009" name="Appl. Environ. Microbiol.">
        <title>Rhizobium sp. strain NGR234 possesses a remarkable number of secretion systems.</title>
        <authorList>
            <person name="Schmeisser C."/>
            <person name="Liesegang H."/>
            <person name="Krysciak D."/>
            <person name="Bakkou N."/>
            <person name="Le Quere A."/>
            <person name="Wollherr A."/>
            <person name="Heinemeyer I."/>
            <person name="Morgenstern B."/>
            <person name="Pommerening-Roeser A."/>
            <person name="Flores M."/>
            <person name="Palacios R."/>
            <person name="Brenner S."/>
            <person name="Gottschalk G."/>
            <person name="Schmitz R.A."/>
            <person name="Broughton W.J."/>
            <person name="Perret X."/>
            <person name="Strittmatter A.W."/>
            <person name="Streit W.R."/>
        </authorList>
    </citation>
    <scope>NUCLEOTIDE SEQUENCE [LARGE SCALE GENOMIC DNA]</scope>
    <source>
        <strain>NBRC 101917 / NGR234</strain>
    </source>
</reference>
<proteinExistence type="inferred from homology"/>
<organism>
    <name type="scientific">Sinorhizobium fredii (strain NBRC 101917 / NGR234)</name>
    <dbReference type="NCBI Taxonomy" id="394"/>
    <lineage>
        <taxon>Bacteria</taxon>
        <taxon>Pseudomonadati</taxon>
        <taxon>Pseudomonadota</taxon>
        <taxon>Alphaproteobacteria</taxon>
        <taxon>Hyphomicrobiales</taxon>
        <taxon>Rhizobiaceae</taxon>
        <taxon>Sinorhizobium/Ensifer group</taxon>
        <taxon>Sinorhizobium</taxon>
    </lineage>
</organism>
<evidence type="ECO:0000255" key="1">
    <source>
        <dbReference type="HAMAP-Rule" id="MF_00624"/>
    </source>
</evidence>
<dbReference type="EC" id="2.7.7.27" evidence="1"/>
<dbReference type="EMBL" id="CP001389">
    <property type="protein sequence ID" value="ACP26640.1"/>
    <property type="molecule type" value="Genomic_DNA"/>
</dbReference>
<dbReference type="RefSeq" id="WP_012709395.1">
    <property type="nucleotide sequence ID" value="NC_012587.1"/>
</dbReference>
<dbReference type="RefSeq" id="YP_002827393.1">
    <property type="nucleotide sequence ID" value="NC_012587.1"/>
</dbReference>
<dbReference type="SMR" id="C3MIS7"/>
<dbReference type="STRING" id="394.NGR_c28960"/>
<dbReference type="KEGG" id="rhi:NGR_c28960"/>
<dbReference type="PATRIC" id="fig|394.7.peg.5733"/>
<dbReference type="eggNOG" id="COG0448">
    <property type="taxonomic scope" value="Bacteria"/>
</dbReference>
<dbReference type="HOGENOM" id="CLU_029499_14_1_5"/>
<dbReference type="OrthoDB" id="9801810at2"/>
<dbReference type="UniPathway" id="UPA00164"/>
<dbReference type="Proteomes" id="UP000001054">
    <property type="component" value="Chromosome"/>
</dbReference>
<dbReference type="GO" id="GO:0005524">
    <property type="term" value="F:ATP binding"/>
    <property type="evidence" value="ECO:0007669"/>
    <property type="project" value="UniProtKB-KW"/>
</dbReference>
<dbReference type="GO" id="GO:0008878">
    <property type="term" value="F:glucose-1-phosphate adenylyltransferase activity"/>
    <property type="evidence" value="ECO:0007669"/>
    <property type="project" value="UniProtKB-UniRule"/>
</dbReference>
<dbReference type="GO" id="GO:0005978">
    <property type="term" value="P:glycogen biosynthetic process"/>
    <property type="evidence" value="ECO:0007669"/>
    <property type="project" value="UniProtKB-UniRule"/>
</dbReference>
<dbReference type="CDD" id="cd02508">
    <property type="entry name" value="ADP_Glucose_PP"/>
    <property type="match status" value="1"/>
</dbReference>
<dbReference type="CDD" id="cd04651">
    <property type="entry name" value="LbH_G1P_AT_C"/>
    <property type="match status" value="1"/>
</dbReference>
<dbReference type="Gene3D" id="2.160.10.10">
    <property type="entry name" value="Hexapeptide repeat proteins"/>
    <property type="match status" value="1"/>
</dbReference>
<dbReference type="Gene3D" id="3.90.550.10">
    <property type="entry name" value="Spore Coat Polysaccharide Biosynthesis Protein SpsA, Chain A"/>
    <property type="match status" value="1"/>
</dbReference>
<dbReference type="HAMAP" id="MF_00624">
    <property type="entry name" value="GlgC"/>
    <property type="match status" value="1"/>
</dbReference>
<dbReference type="InterPro" id="IPR011831">
    <property type="entry name" value="ADP-Glc_PPase"/>
</dbReference>
<dbReference type="InterPro" id="IPR005836">
    <property type="entry name" value="ADP_Glu_pyroP_CS"/>
</dbReference>
<dbReference type="InterPro" id="IPR023049">
    <property type="entry name" value="GlgC_bac"/>
</dbReference>
<dbReference type="InterPro" id="IPR056818">
    <property type="entry name" value="GlmU/GlgC-like_hexapep"/>
</dbReference>
<dbReference type="InterPro" id="IPR005835">
    <property type="entry name" value="NTP_transferase_dom"/>
</dbReference>
<dbReference type="InterPro" id="IPR029044">
    <property type="entry name" value="Nucleotide-diphossugar_trans"/>
</dbReference>
<dbReference type="InterPro" id="IPR011004">
    <property type="entry name" value="Trimer_LpxA-like_sf"/>
</dbReference>
<dbReference type="NCBIfam" id="TIGR02091">
    <property type="entry name" value="glgC"/>
    <property type="match status" value="1"/>
</dbReference>
<dbReference type="NCBIfam" id="NF001947">
    <property type="entry name" value="PRK00725.1"/>
    <property type="match status" value="1"/>
</dbReference>
<dbReference type="NCBIfam" id="NF002023">
    <property type="entry name" value="PRK00844.1"/>
    <property type="match status" value="1"/>
</dbReference>
<dbReference type="PANTHER" id="PTHR43523:SF2">
    <property type="entry name" value="GLUCOSE-1-PHOSPHATE ADENYLYLTRANSFERASE"/>
    <property type="match status" value="1"/>
</dbReference>
<dbReference type="PANTHER" id="PTHR43523">
    <property type="entry name" value="GLUCOSE-1-PHOSPHATE ADENYLYLTRANSFERASE-RELATED"/>
    <property type="match status" value="1"/>
</dbReference>
<dbReference type="Pfam" id="PF24894">
    <property type="entry name" value="Hexapep_GlmU"/>
    <property type="match status" value="1"/>
</dbReference>
<dbReference type="Pfam" id="PF00483">
    <property type="entry name" value="NTP_transferase"/>
    <property type="match status" value="1"/>
</dbReference>
<dbReference type="SUPFAM" id="SSF53448">
    <property type="entry name" value="Nucleotide-diphospho-sugar transferases"/>
    <property type="match status" value="1"/>
</dbReference>
<dbReference type="SUPFAM" id="SSF51161">
    <property type="entry name" value="Trimeric LpxA-like enzymes"/>
    <property type="match status" value="1"/>
</dbReference>
<dbReference type="PROSITE" id="PS00808">
    <property type="entry name" value="ADP_GLC_PYROPHOSPH_1"/>
    <property type="match status" value="1"/>
</dbReference>
<dbReference type="PROSITE" id="PS00809">
    <property type="entry name" value="ADP_GLC_PYROPHOSPH_2"/>
    <property type="match status" value="1"/>
</dbReference>
<dbReference type="PROSITE" id="PS00810">
    <property type="entry name" value="ADP_GLC_PYROPHOSPH_3"/>
    <property type="match status" value="1"/>
</dbReference>
<protein>
    <recommendedName>
        <fullName evidence="1">Glucose-1-phosphate adenylyltransferase</fullName>
        <ecNumber evidence="1">2.7.7.27</ecNumber>
    </recommendedName>
    <alternativeName>
        <fullName evidence="1">ADP-glucose pyrophosphorylase</fullName>
        <shortName evidence="1">ADPGlc PPase</shortName>
    </alternativeName>
    <alternativeName>
        <fullName evidence="1">ADP-glucose synthase</fullName>
    </alternativeName>
</protein>
<accession>C3MIS7</accession>
<name>GLGC_SINFN</name>
<feature type="chain" id="PRO_1000147231" description="Glucose-1-phosphate adenylyltransferase">
    <location>
        <begin position="1"/>
        <end position="420"/>
    </location>
</feature>
<feature type="binding site" evidence="1">
    <location>
        <position position="107"/>
    </location>
    <ligand>
        <name>alpha-D-glucose 1-phosphate</name>
        <dbReference type="ChEBI" id="CHEBI:58601"/>
    </ligand>
</feature>
<feature type="binding site" evidence="1">
    <location>
        <position position="172"/>
    </location>
    <ligand>
        <name>alpha-D-glucose 1-phosphate</name>
        <dbReference type="ChEBI" id="CHEBI:58601"/>
    </ligand>
</feature>
<feature type="binding site" evidence="1">
    <location>
        <begin position="187"/>
        <end position="188"/>
    </location>
    <ligand>
        <name>alpha-D-glucose 1-phosphate</name>
        <dbReference type="ChEBI" id="CHEBI:58601"/>
    </ligand>
</feature>
<feature type="binding site" evidence="1">
    <location>
        <position position="205"/>
    </location>
    <ligand>
        <name>alpha-D-glucose 1-phosphate</name>
        <dbReference type="ChEBI" id="CHEBI:58601"/>
    </ligand>
</feature>
<gene>
    <name evidence="1" type="primary">glgC</name>
    <name type="ordered locus">NGR_c28960</name>
</gene>
<keyword id="KW-0067">ATP-binding</keyword>
<keyword id="KW-0119">Carbohydrate metabolism</keyword>
<keyword id="KW-0320">Glycogen biosynthesis</keyword>
<keyword id="KW-0321">Glycogen metabolism</keyword>
<keyword id="KW-0547">Nucleotide-binding</keyword>
<keyword id="KW-0548">Nucleotidyltransferase</keyword>
<keyword id="KW-1185">Reference proteome</keyword>
<keyword id="KW-0808">Transferase</keyword>
<comment type="function">
    <text evidence="1">Involved in the biosynthesis of ADP-glucose, a building block required for the elongation reactions to produce glycogen. Catalyzes the reaction between ATP and alpha-D-glucose 1-phosphate (G1P) to produce pyrophosphate and ADP-Glc.</text>
</comment>
<comment type="catalytic activity">
    <reaction evidence="1">
        <text>alpha-D-glucose 1-phosphate + ATP + H(+) = ADP-alpha-D-glucose + diphosphate</text>
        <dbReference type="Rhea" id="RHEA:12120"/>
        <dbReference type="ChEBI" id="CHEBI:15378"/>
        <dbReference type="ChEBI" id="CHEBI:30616"/>
        <dbReference type="ChEBI" id="CHEBI:33019"/>
        <dbReference type="ChEBI" id="CHEBI:57498"/>
        <dbReference type="ChEBI" id="CHEBI:58601"/>
        <dbReference type="EC" id="2.7.7.27"/>
    </reaction>
</comment>
<comment type="pathway">
    <text evidence="1">Glycan biosynthesis; glycogen biosynthesis.</text>
</comment>
<comment type="subunit">
    <text evidence="1">Homotetramer.</text>
</comment>
<comment type="similarity">
    <text evidence="1">Belongs to the bacterial/plant glucose-1-phosphate adenylyltransferase family.</text>
</comment>
<sequence length="420" mass="47202">MVEKRTQPLARDAMAYVLAGGRGSRLKELTDRRAKPAVYFGGKARIIDFALSNALNSGIRRIGVATQYKAHSLIRHLQRGWNFFRPERNESFDILPASQRVSETQWYEGTADAVFQNIDIIEDHGVEYMVILAGDHIYKMDYELMLQQHVDSGADVTIGCLEVPRMEATGFGVMHVDNEDRIIAFVEKPADPPGIPGNPEMALASMGIYVFHTKFLMDMLRRDAADPKSSRDFGKDIIPYIVEHGKAVAHRFTHSCVRSDFEREAYWRDVGTIDAYWQANIDLTHITPELDIYDSTWPIWTFSEIKPPAKFVHDDEDRRGSATSSLVSGDCIISGAALNKSLLFTGVRVNSYSRLENAVVLPDVTIGRHSILRNVVIDSRVVIPEGLVVGDDPELDAKRFRRSENGVCLITQTMIDKLGM</sequence>